<feature type="initiator methionine" description="Removed" evidence="2">
    <location>
        <position position="1"/>
    </location>
</feature>
<feature type="chain" id="PRO_0000194836" description="COP9 signalosome complex subunit 5">
    <location>
        <begin position="2"/>
        <end position="334"/>
    </location>
</feature>
<feature type="domain" description="MPN" evidence="3">
    <location>
        <begin position="55"/>
        <end position="192"/>
    </location>
</feature>
<feature type="short sequence motif" description="JAMM motif" evidence="3">
    <location>
        <begin position="138"/>
        <end position="151"/>
    </location>
</feature>
<feature type="binding site" evidence="3">
    <location>
        <position position="138"/>
    </location>
    <ligand>
        <name>Zn(2+)</name>
        <dbReference type="ChEBI" id="CHEBI:29105"/>
        <note>catalytic</note>
    </ligand>
</feature>
<feature type="binding site" evidence="3">
    <location>
        <position position="140"/>
    </location>
    <ligand>
        <name>Zn(2+)</name>
        <dbReference type="ChEBI" id="CHEBI:29105"/>
        <note>catalytic</note>
    </ligand>
</feature>
<feature type="binding site" evidence="3">
    <location>
        <position position="151"/>
    </location>
    <ligand>
        <name>Zn(2+)</name>
        <dbReference type="ChEBI" id="CHEBI:29105"/>
        <note>catalytic</note>
    </ligand>
</feature>
<feature type="modified residue" description="N-acetylalanine" evidence="2">
    <location>
        <position position="2"/>
    </location>
</feature>
<feature type="mutagenesis site" description="Abolishes ability to deneddylate cullins, but keeps ability to stabilize HIF1A protein." evidence="5">
    <original>D</original>
    <variation>N</variation>
    <location>
        <position position="151"/>
    </location>
</feature>
<dbReference type="EC" id="3.4.-.-"/>
<dbReference type="EMBL" id="U70736">
    <property type="protein sequence ID" value="AAD03470.1"/>
    <property type="molecule type" value="mRNA"/>
</dbReference>
<dbReference type="EMBL" id="AF068223">
    <property type="protein sequence ID" value="AAF61318.1"/>
    <property type="molecule type" value="mRNA"/>
</dbReference>
<dbReference type="EMBL" id="AF065386">
    <property type="protein sequence ID" value="AAC17179.1"/>
    <property type="molecule type" value="mRNA"/>
</dbReference>
<dbReference type="EMBL" id="AK012499">
    <property type="protein sequence ID" value="BAB28282.1"/>
    <property type="molecule type" value="mRNA"/>
</dbReference>
<dbReference type="EMBL" id="AK146271">
    <property type="protein sequence ID" value="BAE27030.1"/>
    <property type="molecule type" value="mRNA"/>
</dbReference>
<dbReference type="EMBL" id="AK151492">
    <property type="protein sequence ID" value="BAE30445.1"/>
    <property type="molecule type" value="mRNA"/>
</dbReference>
<dbReference type="EMBL" id="BC046753">
    <property type="protein sequence ID" value="AAH46753.1"/>
    <property type="molecule type" value="mRNA"/>
</dbReference>
<dbReference type="CCDS" id="CCDS14818.1"/>
<dbReference type="RefSeq" id="NP_001264030.1">
    <property type="nucleotide sequence ID" value="NM_001277101.1"/>
</dbReference>
<dbReference type="RefSeq" id="NP_038743.1">
    <property type="nucleotide sequence ID" value="NM_013715.2"/>
</dbReference>
<dbReference type="SMR" id="O35864"/>
<dbReference type="BioGRID" id="205030">
    <property type="interactions" value="66"/>
</dbReference>
<dbReference type="CORUM" id="O35864"/>
<dbReference type="FunCoup" id="O35864">
    <property type="interactions" value="4557"/>
</dbReference>
<dbReference type="IntAct" id="O35864">
    <property type="interactions" value="1"/>
</dbReference>
<dbReference type="MINT" id="O35864"/>
<dbReference type="STRING" id="10090.ENSMUSP00000027050"/>
<dbReference type="MEROPS" id="M67.002"/>
<dbReference type="iPTMnet" id="O35864"/>
<dbReference type="PhosphoSitePlus" id="O35864"/>
<dbReference type="SwissPalm" id="O35864"/>
<dbReference type="REPRODUCTION-2DPAGE" id="O35864"/>
<dbReference type="jPOST" id="O35864"/>
<dbReference type="PaxDb" id="10090-ENSMUSP00000027050"/>
<dbReference type="PeptideAtlas" id="O35864"/>
<dbReference type="ProteomicsDB" id="284138"/>
<dbReference type="Pumba" id="O35864"/>
<dbReference type="Antibodypedia" id="1439">
    <property type="antibodies" value="534 antibodies from 43 providers"/>
</dbReference>
<dbReference type="DNASU" id="26754"/>
<dbReference type="Ensembl" id="ENSMUST00000027050.10">
    <property type="protein sequence ID" value="ENSMUSP00000027050.4"/>
    <property type="gene ID" value="ENSMUSG00000025917.10"/>
</dbReference>
<dbReference type="GeneID" id="26754"/>
<dbReference type="KEGG" id="mmu:26754"/>
<dbReference type="UCSC" id="uc007ahe.2">
    <property type="organism name" value="mouse"/>
</dbReference>
<dbReference type="AGR" id="MGI:1349415"/>
<dbReference type="CTD" id="10987"/>
<dbReference type="MGI" id="MGI:1349415">
    <property type="gene designation" value="Cops5"/>
</dbReference>
<dbReference type="VEuPathDB" id="HostDB:ENSMUSG00000025917"/>
<dbReference type="eggNOG" id="KOG1554">
    <property type="taxonomic scope" value="Eukaryota"/>
</dbReference>
<dbReference type="GeneTree" id="ENSGT00550000074850"/>
<dbReference type="HOGENOM" id="CLU_053034_0_1_1"/>
<dbReference type="InParanoid" id="O35864"/>
<dbReference type="OMA" id="VKMKLFQ"/>
<dbReference type="OrthoDB" id="10266268at2759"/>
<dbReference type="PhylomeDB" id="O35864"/>
<dbReference type="TreeFam" id="TF105601"/>
<dbReference type="Reactome" id="R-MMU-5696394">
    <property type="pathway name" value="DNA Damage Recognition in GG-NER"/>
</dbReference>
<dbReference type="Reactome" id="R-MMU-6781823">
    <property type="pathway name" value="Formation of TC-NER Pre-Incision Complex"/>
</dbReference>
<dbReference type="Reactome" id="R-MMU-8856825">
    <property type="pathway name" value="Cargo recognition for clathrin-mediated endocytosis"/>
</dbReference>
<dbReference type="Reactome" id="R-MMU-8951664">
    <property type="pathway name" value="Neddylation"/>
</dbReference>
<dbReference type="BioGRID-ORCS" id="26754">
    <property type="hits" value="25 hits in 82 CRISPR screens"/>
</dbReference>
<dbReference type="ChiTaRS" id="Cops5">
    <property type="organism name" value="mouse"/>
</dbReference>
<dbReference type="PRO" id="PR:O35864"/>
<dbReference type="Proteomes" id="UP000000589">
    <property type="component" value="Chromosome 1"/>
</dbReference>
<dbReference type="RNAct" id="O35864">
    <property type="molecule type" value="protein"/>
</dbReference>
<dbReference type="Bgee" id="ENSMUSG00000025917">
    <property type="expression patterns" value="Expressed in undifferentiated genital tubercle and 293 other cell types or tissues"/>
</dbReference>
<dbReference type="ExpressionAtlas" id="O35864">
    <property type="expression patterns" value="baseline and differential"/>
</dbReference>
<dbReference type="GO" id="GO:0000785">
    <property type="term" value="C:chromatin"/>
    <property type="evidence" value="ECO:0007669"/>
    <property type="project" value="Ensembl"/>
</dbReference>
<dbReference type="GO" id="GO:0008180">
    <property type="term" value="C:COP9 signalosome"/>
    <property type="evidence" value="ECO:0000314"/>
    <property type="project" value="MGI"/>
</dbReference>
<dbReference type="GO" id="GO:0005737">
    <property type="term" value="C:cytoplasm"/>
    <property type="evidence" value="ECO:0000250"/>
    <property type="project" value="UniProtKB"/>
</dbReference>
<dbReference type="GO" id="GO:0005829">
    <property type="term" value="C:cytosol"/>
    <property type="evidence" value="ECO:0000250"/>
    <property type="project" value="UniProtKB"/>
</dbReference>
<dbReference type="GO" id="GO:0005654">
    <property type="term" value="C:nucleoplasm"/>
    <property type="evidence" value="ECO:0007669"/>
    <property type="project" value="Ensembl"/>
</dbReference>
<dbReference type="GO" id="GO:0048471">
    <property type="term" value="C:perinuclear region of cytoplasm"/>
    <property type="evidence" value="ECO:0000250"/>
    <property type="project" value="UniProtKB"/>
</dbReference>
<dbReference type="GO" id="GO:0008021">
    <property type="term" value="C:synaptic vesicle"/>
    <property type="evidence" value="ECO:0007669"/>
    <property type="project" value="UniProtKB-SubCell"/>
</dbReference>
<dbReference type="GO" id="GO:0005667">
    <property type="term" value="C:transcription regulator complex"/>
    <property type="evidence" value="ECO:0000304"/>
    <property type="project" value="MGI"/>
</dbReference>
<dbReference type="GO" id="GO:0019899">
    <property type="term" value="F:enzyme binding"/>
    <property type="evidence" value="ECO:0000353"/>
    <property type="project" value="BHF-UCL"/>
</dbReference>
<dbReference type="GO" id="GO:0035718">
    <property type="term" value="F:macrophage migration inhibitory factor binding"/>
    <property type="evidence" value="ECO:0000353"/>
    <property type="project" value="BHF-UCL"/>
</dbReference>
<dbReference type="GO" id="GO:0046872">
    <property type="term" value="F:metal ion binding"/>
    <property type="evidence" value="ECO:0007669"/>
    <property type="project" value="UniProtKB-KW"/>
</dbReference>
<dbReference type="GO" id="GO:0140492">
    <property type="term" value="F:metal-dependent deubiquitinase activity"/>
    <property type="evidence" value="ECO:0007669"/>
    <property type="project" value="Ensembl"/>
</dbReference>
<dbReference type="GO" id="GO:0003713">
    <property type="term" value="F:transcription coactivator activity"/>
    <property type="evidence" value="ECO:0000304"/>
    <property type="project" value="MGI"/>
</dbReference>
<dbReference type="GO" id="GO:1990182">
    <property type="term" value="P:exosomal secretion"/>
    <property type="evidence" value="ECO:0007669"/>
    <property type="project" value="Ensembl"/>
</dbReference>
<dbReference type="GO" id="GO:0043066">
    <property type="term" value="P:negative regulation of apoptotic process"/>
    <property type="evidence" value="ECO:0000250"/>
    <property type="project" value="UniProtKB"/>
</dbReference>
<dbReference type="GO" id="GO:0051091">
    <property type="term" value="P:positive regulation of DNA-binding transcription factor activity"/>
    <property type="evidence" value="ECO:0000250"/>
    <property type="project" value="UniProtKB"/>
</dbReference>
<dbReference type="GO" id="GO:0045944">
    <property type="term" value="P:positive regulation of transcription by RNA polymerase II"/>
    <property type="evidence" value="ECO:0007669"/>
    <property type="project" value="Ensembl"/>
</dbReference>
<dbReference type="GO" id="GO:0000338">
    <property type="term" value="P:protein deneddylation"/>
    <property type="evidence" value="ECO:0007669"/>
    <property type="project" value="Ensembl"/>
</dbReference>
<dbReference type="GO" id="GO:0006508">
    <property type="term" value="P:proteolysis"/>
    <property type="evidence" value="ECO:0007669"/>
    <property type="project" value="UniProtKB-KW"/>
</dbReference>
<dbReference type="GO" id="GO:0051726">
    <property type="term" value="P:regulation of cell cycle"/>
    <property type="evidence" value="ECO:0000315"/>
    <property type="project" value="MGI"/>
</dbReference>
<dbReference type="GO" id="GO:0006355">
    <property type="term" value="P:regulation of DNA-templated transcription"/>
    <property type="evidence" value="ECO:0000304"/>
    <property type="project" value="MGI"/>
</dbReference>
<dbReference type="GO" id="GO:1903894">
    <property type="term" value="P:regulation of IRE1-mediated unfolded protein response"/>
    <property type="evidence" value="ECO:0007669"/>
    <property type="project" value="Ensembl"/>
</dbReference>
<dbReference type="GO" id="GO:0046328">
    <property type="term" value="P:regulation of JNK cascade"/>
    <property type="evidence" value="ECO:0007669"/>
    <property type="project" value="Ensembl"/>
</dbReference>
<dbReference type="CDD" id="cd08069">
    <property type="entry name" value="MPN_RPN11_CSN5"/>
    <property type="match status" value="1"/>
</dbReference>
<dbReference type="FunFam" id="3.40.140.10:FF:000203">
    <property type="entry name" value="COP9 signalosome complex subunit 5"/>
    <property type="match status" value="1"/>
</dbReference>
<dbReference type="Gene3D" id="3.40.140.10">
    <property type="entry name" value="Cytidine Deaminase, domain 2"/>
    <property type="match status" value="1"/>
</dbReference>
<dbReference type="InterPro" id="IPR040961">
    <property type="entry name" value="CSN5_C"/>
</dbReference>
<dbReference type="InterPro" id="IPR000555">
    <property type="entry name" value="JAMM/MPN+_dom"/>
</dbReference>
<dbReference type="InterPro" id="IPR050242">
    <property type="entry name" value="JAMM_MPN+_peptidase_M67A"/>
</dbReference>
<dbReference type="InterPro" id="IPR037518">
    <property type="entry name" value="MPN"/>
</dbReference>
<dbReference type="PANTHER" id="PTHR10410">
    <property type="entry name" value="EUKARYOTIC TRANSLATION INITIATION FACTOR 3 -RELATED"/>
    <property type="match status" value="1"/>
</dbReference>
<dbReference type="Pfam" id="PF18323">
    <property type="entry name" value="CSN5_C"/>
    <property type="match status" value="1"/>
</dbReference>
<dbReference type="Pfam" id="PF01398">
    <property type="entry name" value="JAB"/>
    <property type="match status" value="1"/>
</dbReference>
<dbReference type="SMART" id="SM00232">
    <property type="entry name" value="JAB_MPN"/>
    <property type="match status" value="1"/>
</dbReference>
<dbReference type="SUPFAM" id="SSF102712">
    <property type="entry name" value="JAB1/MPN domain"/>
    <property type="match status" value="1"/>
</dbReference>
<dbReference type="PROSITE" id="PS50249">
    <property type="entry name" value="MPN"/>
    <property type="match status" value="1"/>
</dbReference>
<keyword id="KW-0007">Acetylation</keyword>
<keyword id="KW-0963">Cytoplasm</keyword>
<keyword id="KW-0968">Cytoplasmic vesicle</keyword>
<keyword id="KW-0903">Direct protein sequencing</keyword>
<keyword id="KW-0378">Hydrolase</keyword>
<keyword id="KW-0479">Metal-binding</keyword>
<keyword id="KW-0482">Metalloprotease</keyword>
<keyword id="KW-0539">Nucleus</keyword>
<keyword id="KW-0645">Protease</keyword>
<keyword id="KW-1185">Reference proteome</keyword>
<keyword id="KW-0736">Signalosome</keyword>
<keyword id="KW-0770">Synapse</keyword>
<keyword id="KW-0862">Zinc</keyword>
<reference key="1">
    <citation type="journal article" date="1997" name="J. Biol. Chem.">
        <title>Structure of cDNAs encoding human eukaryotic initiation factor 3 subunits. Possible roles in RNA binding and macromolecular assembly.</title>
        <authorList>
            <person name="Asano K."/>
            <person name="Vornlocher H.-P."/>
            <person name="Richter-Cook N.J."/>
            <person name="Merrick W.C."/>
            <person name="Hinnebusch A.G."/>
            <person name="Hershey J.W.B."/>
        </authorList>
    </citation>
    <scope>NUCLEOTIDE SEQUENCE [MRNA]</scope>
</reference>
<reference key="2">
    <citation type="journal article" date="1999" name="Nature">
        <title>Degradation of the cyclin-dependent-kinase inhibitor p27Kip1 is instigated by Jab1.</title>
        <authorList>
            <person name="Tomoda K."/>
            <person name="Kubota Y."/>
            <person name="Kato J.-Y."/>
        </authorList>
    </citation>
    <scope>NUCLEOTIDE SEQUENCE [MRNA]</scope>
    <scope>INTERACTION WITH CDKN1B</scope>
    <source>
        <strain>NIH Swiss</strain>
    </source>
</reference>
<reference key="3">
    <citation type="journal article" date="2000" name="Gene">
        <title>Characterization of the mouse JAB1 cDNA and protein.</title>
        <authorList>
            <person name="Bounpheng M.A."/>
            <person name="Melnikova I.N."/>
            <person name="Dodds S.G."/>
            <person name="Chen H."/>
            <person name="Copeland N.G."/>
            <person name="Gilbert D.J."/>
            <person name="Jenkins N.A."/>
            <person name="Christy B.A."/>
        </authorList>
    </citation>
    <scope>NUCLEOTIDE SEQUENCE [MRNA]</scope>
    <scope>SUBCELLULAR LOCATION</scope>
    <scope>TISSUE SPECIFICITY</scope>
    <source>
        <strain>BALB/cJ</strain>
    </source>
</reference>
<reference key="4">
    <citation type="journal article" date="2005" name="Science">
        <title>The transcriptional landscape of the mammalian genome.</title>
        <authorList>
            <person name="Carninci P."/>
            <person name="Kasukawa T."/>
            <person name="Katayama S."/>
            <person name="Gough J."/>
            <person name="Frith M.C."/>
            <person name="Maeda N."/>
            <person name="Oyama R."/>
            <person name="Ravasi T."/>
            <person name="Lenhard B."/>
            <person name="Wells C."/>
            <person name="Kodzius R."/>
            <person name="Shimokawa K."/>
            <person name="Bajic V.B."/>
            <person name="Brenner S.E."/>
            <person name="Batalov S."/>
            <person name="Forrest A.R."/>
            <person name="Zavolan M."/>
            <person name="Davis M.J."/>
            <person name="Wilming L.G."/>
            <person name="Aidinis V."/>
            <person name="Allen J.E."/>
            <person name="Ambesi-Impiombato A."/>
            <person name="Apweiler R."/>
            <person name="Aturaliya R.N."/>
            <person name="Bailey T.L."/>
            <person name="Bansal M."/>
            <person name="Baxter L."/>
            <person name="Beisel K.W."/>
            <person name="Bersano T."/>
            <person name="Bono H."/>
            <person name="Chalk A.M."/>
            <person name="Chiu K.P."/>
            <person name="Choudhary V."/>
            <person name="Christoffels A."/>
            <person name="Clutterbuck D.R."/>
            <person name="Crowe M.L."/>
            <person name="Dalla E."/>
            <person name="Dalrymple B.P."/>
            <person name="de Bono B."/>
            <person name="Della Gatta G."/>
            <person name="di Bernardo D."/>
            <person name="Down T."/>
            <person name="Engstrom P."/>
            <person name="Fagiolini M."/>
            <person name="Faulkner G."/>
            <person name="Fletcher C.F."/>
            <person name="Fukushima T."/>
            <person name="Furuno M."/>
            <person name="Futaki S."/>
            <person name="Gariboldi M."/>
            <person name="Georgii-Hemming P."/>
            <person name="Gingeras T.R."/>
            <person name="Gojobori T."/>
            <person name="Green R.E."/>
            <person name="Gustincich S."/>
            <person name="Harbers M."/>
            <person name="Hayashi Y."/>
            <person name="Hensch T.K."/>
            <person name="Hirokawa N."/>
            <person name="Hill D."/>
            <person name="Huminiecki L."/>
            <person name="Iacono M."/>
            <person name="Ikeo K."/>
            <person name="Iwama A."/>
            <person name="Ishikawa T."/>
            <person name="Jakt M."/>
            <person name="Kanapin A."/>
            <person name="Katoh M."/>
            <person name="Kawasawa Y."/>
            <person name="Kelso J."/>
            <person name="Kitamura H."/>
            <person name="Kitano H."/>
            <person name="Kollias G."/>
            <person name="Krishnan S.P."/>
            <person name="Kruger A."/>
            <person name="Kummerfeld S.K."/>
            <person name="Kurochkin I.V."/>
            <person name="Lareau L.F."/>
            <person name="Lazarevic D."/>
            <person name="Lipovich L."/>
            <person name="Liu J."/>
            <person name="Liuni S."/>
            <person name="McWilliam S."/>
            <person name="Madan Babu M."/>
            <person name="Madera M."/>
            <person name="Marchionni L."/>
            <person name="Matsuda H."/>
            <person name="Matsuzawa S."/>
            <person name="Miki H."/>
            <person name="Mignone F."/>
            <person name="Miyake S."/>
            <person name="Morris K."/>
            <person name="Mottagui-Tabar S."/>
            <person name="Mulder N."/>
            <person name="Nakano N."/>
            <person name="Nakauchi H."/>
            <person name="Ng P."/>
            <person name="Nilsson R."/>
            <person name="Nishiguchi S."/>
            <person name="Nishikawa S."/>
            <person name="Nori F."/>
            <person name="Ohara O."/>
            <person name="Okazaki Y."/>
            <person name="Orlando V."/>
            <person name="Pang K.C."/>
            <person name="Pavan W.J."/>
            <person name="Pavesi G."/>
            <person name="Pesole G."/>
            <person name="Petrovsky N."/>
            <person name="Piazza S."/>
            <person name="Reed J."/>
            <person name="Reid J.F."/>
            <person name="Ring B.Z."/>
            <person name="Ringwald M."/>
            <person name="Rost B."/>
            <person name="Ruan Y."/>
            <person name="Salzberg S.L."/>
            <person name="Sandelin A."/>
            <person name="Schneider C."/>
            <person name="Schoenbach C."/>
            <person name="Sekiguchi K."/>
            <person name="Semple C.A."/>
            <person name="Seno S."/>
            <person name="Sessa L."/>
            <person name="Sheng Y."/>
            <person name="Shibata Y."/>
            <person name="Shimada H."/>
            <person name="Shimada K."/>
            <person name="Silva D."/>
            <person name="Sinclair B."/>
            <person name="Sperling S."/>
            <person name="Stupka E."/>
            <person name="Sugiura K."/>
            <person name="Sultana R."/>
            <person name="Takenaka Y."/>
            <person name="Taki K."/>
            <person name="Tammoja K."/>
            <person name="Tan S.L."/>
            <person name="Tang S."/>
            <person name="Taylor M.S."/>
            <person name="Tegner J."/>
            <person name="Teichmann S.A."/>
            <person name="Ueda H.R."/>
            <person name="van Nimwegen E."/>
            <person name="Verardo R."/>
            <person name="Wei C.L."/>
            <person name="Yagi K."/>
            <person name="Yamanishi H."/>
            <person name="Zabarovsky E."/>
            <person name="Zhu S."/>
            <person name="Zimmer A."/>
            <person name="Hide W."/>
            <person name="Bult C."/>
            <person name="Grimmond S.M."/>
            <person name="Teasdale R.D."/>
            <person name="Liu E.T."/>
            <person name="Brusic V."/>
            <person name="Quackenbush J."/>
            <person name="Wahlestedt C."/>
            <person name="Mattick J.S."/>
            <person name="Hume D.A."/>
            <person name="Kai C."/>
            <person name="Sasaki D."/>
            <person name="Tomaru Y."/>
            <person name="Fukuda S."/>
            <person name="Kanamori-Katayama M."/>
            <person name="Suzuki M."/>
            <person name="Aoki J."/>
            <person name="Arakawa T."/>
            <person name="Iida J."/>
            <person name="Imamura K."/>
            <person name="Itoh M."/>
            <person name="Kato T."/>
            <person name="Kawaji H."/>
            <person name="Kawagashira N."/>
            <person name="Kawashima T."/>
            <person name="Kojima M."/>
            <person name="Kondo S."/>
            <person name="Konno H."/>
            <person name="Nakano K."/>
            <person name="Ninomiya N."/>
            <person name="Nishio T."/>
            <person name="Okada M."/>
            <person name="Plessy C."/>
            <person name="Shibata K."/>
            <person name="Shiraki T."/>
            <person name="Suzuki S."/>
            <person name="Tagami M."/>
            <person name="Waki K."/>
            <person name="Watahiki A."/>
            <person name="Okamura-Oho Y."/>
            <person name="Suzuki H."/>
            <person name="Kawai J."/>
            <person name="Hayashizaki Y."/>
        </authorList>
    </citation>
    <scope>NUCLEOTIDE SEQUENCE [LARGE SCALE MRNA]</scope>
    <source>
        <strain>BALB/cJ</strain>
        <strain>C57BL/6J</strain>
        <tissue>Bone marrow</tissue>
        <tissue>Embryo</tissue>
    </source>
</reference>
<reference key="5">
    <citation type="journal article" date="2004" name="Genome Res.">
        <title>The status, quality, and expansion of the NIH full-length cDNA project: the Mammalian Gene Collection (MGC).</title>
        <authorList>
            <consortium name="The MGC Project Team"/>
        </authorList>
    </citation>
    <scope>NUCLEOTIDE SEQUENCE [LARGE SCALE MRNA]</scope>
    <source>
        <strain>C57BL/6J</strain>
        <tissue>Brain</tissue>
    </source>
</reference>
<reference key="6">
    <citation type="submission" date="2007-07" db="UniProtKB">
        <authorList>
            <person name="Lubec G."/>
            <person name="Klug S."/>
            <person name="Yang J.W."/>
            <person name="Zigmond M."/>
        </authorList>
    </citation>
    <scope>PROTEIN SEQUENCE OF 192-210 AND 220-230</scope>
    <scope>IDENTIFICATION BY MASS SPECTROMETRY</scope>
    <source>
        <tissue>Brain</tissue>
        <tissue>Hippocampus</tissue>
    </source>
</reference>
<reference key="7">
    <citation type="journal article" date="1998" name="Curr. Biol.">
        <title>The COP9 complex is conserved between plants and mammals and is related to the 26S proteasome regulatory complex.</title>
        <authorList>
            <person name="Wei N."/>
            <person name="Tsuge T."/>
            <person name="Serino G."/>
            <person name="Dohmae N."/>
            <person name="Takio K."/>
            <person name="Matsui M."/>
            <person name="Deng X.-W."/>
        </authorList>
    </citation>
    <scope>IDENTIFICATION IN THE CSN COMPLEX</scope>
    <source>
        <strain>C57BL/6J</strain>
    </source>
</reference>
<reference key="8">
    <citation type="journal article" date="2002" name="J. Biol. Chem.">
        <title>Jab1 interacts directly with HIF-1alpha and regulates its stability.</title>
        <authorList>
            <person name="Bae M.-K."/>
            <person name="Ahn M.-Y."/>
            <person name="Jeong J.-W."/>
            <person name="Bae M.-H."/>
            <person name="Lee Y.M."/>
            <person name="Bae S.-K."/>
            <person name="Park J.-W."/>
            <person name="Kim K.-R."/>
            <person name="Kim K.-W."/>
        </authorList>
    </citation>
    <scope>INTERACTION WITH HIF1A</scope>
</reference>
<reference key="9">
    <citation type="journal article" date="2004" name="Genes Dev.">
        <title>Distinct aerobic and hypoxic mechanisms of HIF-alpha regulation by CSN5.</title>
        <authorList>
            <person name="Bemis L."/>
            <person name="Chan D.A."/>
            <person name="Finkielstein C.V."/>
            <person name="Qi L."/>
            <person name="Sutphin P.D."/>
            <person name="Chen X."/>
            <person name="Stenmark K."/>
            <person name="Giaccia A.J."/>
            <person name="Zundel W."/>
        </authorList>
    </citation>
    <scope>MUTAGENESIS OF ASP-151</scope>
</reference>
<reference key="10">
    <citation type="journal article" date="2004" name="J. Mol. Biol.">
        <title>Ubiquitin-dependent degradation of Id1 and Id3 is mediated by the COP9 signalosome.</title>
        <authorList>
            <person name="Berse M."/>
            <person name="Bounpheng M."/>
            <person name="Huang X."/>
            <person name="Christy B."/>
            <person name="Pollmann C."/>
            <person name="Dubiel W."/>
        </authorList>
    </citation>
    <scope>INTERACTION WITH ID1 AND ID3</scope>
</reference>
<reference key="11">
    <citation type="journal article" date="2010" name="Cell">
        <title>A tissue-specific atlas of mouse protein phosphorylation and expression.</title>
        <authorList>
            <person name="Huttlin E.L."/>
            <person name="Jedrychowski M.P."/>
            <person name="Elias J.E."/>
            <person name="Goswami T."/>
            <person name="Rad R."/>
            <person name="Beausoleil S.A."/>
            <person name="Villen J."/>
            <person name="Haas W."/>
            <person name="Sowa M.E."/>
            <person name="Gygi S.P."/>
        </authorList>
    </citation>
    <scope>IDENTIFICATION BY MASS SPECTROMETRY [LARGE SCALE ANALYSIS]</scope>
    <source>
        <tissue>Brain</tissue>
        <tissue>Brown adipose tissue</tissue>
        <tissue>Heart</tissue>
        <tissue>Kidney</tissue>
        <tissue>Liver</tissue>
        <tissue>Lung</tissue>
        <tissue>Pancreas</tissue>
        <tissue>Spleen</tissue>
        <tissue>Testis</tissue>
    </source>
</reference>
<gene>
    <name type="primary">Cops5</name>
    <name type="synonym">Csn5</name>
    <name type="synonym">Jab1</name>
    <name type="synonym">Kic2</name>
</gene>
<comment type="function">
    <text evidence="2">Probable protease subunit of the COP9 signalosome complex (CSN), a complex involved in various cellular and developmental processes. The CSN complex is an essential regulator of the ubiquitin (Ubl) conjugation pathway by mediating the deneddylation of the cullin subunits of the SCF-type E3 ligase complexes, leading to decrease the Ubl ligase activity of SCF-type complexes such as SCF, CSA or DDB2. Promotes the proteasomal degradation of BRSK2. The complex is also involved in phosphorylation of p53/TP53, c-jun/JUN, IkappaBalpha/NFKBIA, ITPK1 and IRF8, possibly via its association with CK2 and PKD kinases. CSN-dependent phosphorylation of TP53 and JUN promotes and protects degradation by the Ubl system, respectively. In the complex, it probably acts as the catalytic center that mediates the cleavage of Nedd8 from cullins. It however has no metalloprotease activity by itself and requires the other subunits of the CSN complex. Interacts directly with a large number of proteins that are regulated by the CSN complex, confirming a key role in the complex.</text>
</comment>
<comment type="cofactor">
    <cofactor evidence="1">
        <name>a divalent metal cation</name>
        <dbReference type="ChEBI" id="CHEBI:60240"/>
    </cofactor>
</comment>
<comment type="subunit">
    <text evidence="2">Component of the CSN complex, composed of COPS1/GPS1, COPS2, COPS3, COPS4, COPS5, COPS6, COPS7 (COPS7A or COPS7B), COPS8 and COPS9. In the complex, it probably interacts directly with COPS1, COPS2, COPS4, COPS6 and COPS7 (COPS7A or COPS7B) and COPS9. The CSN complex interacts with the BRISC complex. Also exists as monomeric form. Interacts with TP53, MIF, JUN, UCHL1, NCOA1, BCL3, GFER, PGR, LHCGR, SMAD4, SMAD7, ITGB2 and TOP2A. Part of a complex consisting of RANBP9, RAN, DYRK1B and COPS5. Interacts with CDKN1B, HIF1A, ID1 and ID3. Interacts with IFIT3. Interacts with BRSK2 (By similarity). Interacts with ZDHHC16 (By similarity). Interacts with MINDY3 (By similarity). Interacts with FANK1; regulates the phosphorylation of JUN and the transcriptional activity of AP-1 (By similarity). Interacts with NUPR1; this interaction allows COPS5-dependent CDKN1B nuclear to cytoplasm translocation (By similarity).</text>
</comment>
<comment type="subcellular location">
    <subcellularLocation>
        <location evidence="4">Cytoplasm</location>
        <location evidence="4">Cytosol</location>
    </subcellularLocation>
    <subcellularLocation>
        <location evidence="4">Nucleus</location>
    </subcellularLocation>
    <subcellularLocation>
        <location evidence="2">Cytoplasm</location>
        <location evidence="2">Perinuclear region</location>
    </subcellularLocation>
    <subcellularLocation>
        <location evidence="2">Cytoplasmic vesicle</location>
        <location evidence="2">Secretory vesicle</location>
        <location evidence="2">Synaptic vesicle</location>
    </subcellularLocation>
    <text evidence="2">Nuclear localization is diminished in the presence of IFIT3.</text>
</comment>
<comment type="tissue specificity">
    <text evidence="4">Widely expressed.</text>
</comment>
<comment type="domain">
    <text evidence="5">The JAMM motif is essential for the protease activity of the CSN complex resulting in deneddylation of cullins. It constitutes the catalytic center of the complex.</text>
</comment>
<comment type="miscellaneous">
    <text evidence="1">The CSN complex is associated with some 'Lys-63'-specific deubiquitination. Such activity is however not mediated by the core CSN complex but by the BRCC3/BRCC36 component of the BRISC complex (By similarity).</text>
</comment>
<comment type="similarity">
    <text evidence="6">Belongs to the peptidase M67A family. CSN5 subfamily.</text>
</comment>
<sequence>MAASGSGMAQKTWELANNMQEAQSIDEIYKYDKKQQQEILAAKPWTKDHHYFKYCKISALALLKMVMHARSGGNLEVMGLMLGKVDGETMIIMDSFALPVEGTETRVNAQAAAYEYMAAYIENAKQVGRLENAIGWYHSHPGYGCWLSGIDVSTQMLNQQFQEPFVAVVIDPTRTISAGKVNLGAFRTYPKGYKPPDEGPSEYQTIPLNKIEDFGVHCKQYYALEVSYFKSSLDRKLLELLWNKYWVNTLSSSSLLTNADYTTGQVFDLSEKLEQSEAQLGRGSFMLGLETHDRKSEDKLAKATRDSCKTTIEAIHGLMSQVIKDKLFNQINVA</sequence>
<protein>
    <recommendedName>
        <fullName>COP9 signalosome complex subunit 5</fullName>
        <shortName>SGN5</shortName>
        <shortName>Signalosome subunit 5</shortName>
        <ecNumber>3.4.-.-</ecNumber>
    </recommendedName>
    <alternativeName>
        <fullName>Jun activation domain-binding protein 1</fullName>
    </alternativeName>
    <alternativeName>
        <fullName>Kip1 C-terminus-interacting protein 2</fullName>
    </alternativeName>
</protein>
<accession>O35864</accession>
<accession>Q3UA70</accession>
<accession>Q8C1S1</accession>
<proteinExistence type="evidence at protein level"/>
<evidence type="ECO:0000250" key="1"/>
<evidence type="ECO:0000250" key="2">
    <source>
        <dbReference type="UniProtKB" id="Q92905"/>
    </source>
</evidence>
<evidence type="ECO:0000255" key="3">
    <source>
        <dbReference type="PROSITE-ProRule" id="PRU01182"/>
    </source>
</evidence>
<evidence type="ECO:0000269" key="4">
    <source>
    </source>
</evidence>
<evidence type="ECO:0000269" key="5">
    <source>
    </source>
</evidence>
<evidence type="ECO:0000305" key="6"/>
<organism>
    <name type="scientific">Mus musculus</name>
    <name type="common">Mouse</name>
    <dbReference type="NCBI Taxonomy" id="10090"/>
    <lineage>
        <taxon>Eukaryota</taxon>
        <taxon>Metazoa</taxon>
        <taxon>Chordata</taxon>
        <taxon>Craniata</taxon>
        <taxon>Vertebrata</taxon>
        <taxon>Euteleostomi</taxon>
        <taxon>Mammalia</taxon>
        <taxon>Eutheria</taxon>
        <taxon>Euarchontoglires</taxon>
        <taxon>Glires</taxon>
        <taxon>Rodentia</taxon>
        <taxon>Myomorpha</taxon>
        <taxon>Muroidea</taxon>
        <taxon>Muridae</taxon>
        <taxon>Murinae</taxon>
        <taxon>Mus</taxon>
        <taxon>Mus</taxon>
    </lineage>
</organism>
<name>CSN5_MOUSE</name>